<organism>
    <name type="scientific">Escherichia coli O9:H4 (strain HS)</name>
    <dbReference type="NCBI Taxonomy" id="331112"/>
    <lineage>
        <taxon>Bacteria</taxon>
        <taxon>Pseudomonadati</taxon>
        <taxon>Pseudomonadota</taxon>
        <taxon>Gammaproteobacteria</taxon>
        <taxon>Enterobacterales</taxon>
        <taxon>Enterobacteriaceae</taxon>
        <taxon>Escherichia</taxon>
    </lineage>
</organism>
<protein>
    <recommendedName>
        <fullName evidence="1">Selenide, water dikinase</fullName>
        <ecNumber evidence="1">2.7.9.3</ecNumber>
    </recommendedName>
    <alternativeName>
        <fullName evidence="1">Selenium donor protein</fullName>
    </alternativeName>
    <alternativeName>
        <fullName evidence="1">Selenophosphate synthase</fullName>
    </alternativeName>
</protein>
<reference key="1">
    <citation type="journal article" date="2008" name="J. Bacteriol.">
        <title>The pangenome structure of Escherichia coli: comparative genomic analysis of E. coli commensal and pathogenic isolates.</title>
        <authorList>
            <person name="Rasko D.A."/>
            <person name="Rosovitz M.J."/>
            <person name="Myers G.S.A."/>
            <person name="Mongodin E.F."/>
            <person name="Fricke W.F."/>
            <person name="Gajer P."/>
            <person name="Crabtree J."/>
            <person name="Sebaihia M."/>
            <person name="Thomson N.R."/>
            <person name="Chaudhuri R."/>
            <person name="Henderson I.R."/>
            <person name="Sperandio V."/>
            <person name="Ravel J."/>
        </authorList>
    </citation>
    <scope>NUCLEOTIDE SEQUENCE [LARGE SCALE GENOMIC DNA]</scope>
    <source>
        <strain>HS</strain>
    </source>
</reference>
<proteinExistence type="inferred from homology"/>
<feature type="chain" id="PRO_0000318669" description="Selenide, water dikinase">
    <location>
        <begin position="1"/>
        <end position="347"/>
    </location>
</feature>
<feature type="active site" evidence="1">
    <location>
        <position position="17"/>
    </location>
</feature>
<feature type="binding site" description="in other chain" evidence="1">
    <location>
        <position position="20"/>
    </location>
    <ligand>
        <name>ATP</name>
        <dbReference type="ChEBI" id="CHEBI:30616"/>
        <note>ligand shared between dimeric partners</note>
    </ligand>
</feature>
<feature type="binding site" description="in other chain" evidence="1">
    <location>
        <begin position="48"/>
        <end position="50"/>
    </location>
    <ligand>
        <name>ATP</name>
        <dbReference type="ChEBI" id="CHEBI:30616"/>
        <note>ligand shared between dimeric partners</note>
    </ligand>
</feature>
<feature type="binding site" evidence="1">
    <location>
        <position position="51"/>
    </location>
    <ligand>
        <name>Mg(2+)</name>
        <dbReference type="ChEBI" id="CHEBI:18420"/>
    </ligand>
</feature>
<feature type="binding site" description="in other chain" evidence="1">
    <location>
        <position position="68"/>
    </location>
    <ligand>
        <name>ATP</name>
        <dbReference type="ChEBI" id="CHEBI:30616"/>
        <note>ligand shared between dimeric partners</note>
    </ligand>
</feature>
<feature type="binding site" description="in other chain" evidence="1">
    <location>
        <position position="91"/>
    </location>
    <ligand>
        <name>ATP</name>
        <dbReference type="ChEBI" id="CHEBI:30616"/>
        <note>ligand shared between dimeric partners</note>
    </ligand>
</feature>
<feature type="binding site" evidence="1">
    <location>
        <position position="91"/>
    </location>
    <ligand>
        <name>Mg(2+)</name>
        <dbReference type="ChEBI" id="CHEBI:18420"/>
    </ligand>
</feature>
<feature type="binding site" evidence="1">
    <location>
        <begin position="139"/>
        <end position="141"/>
    </location>
    <ligand>
        <name>ATP</name>
        <dbReference type="ChEBI" id="CHEBI:30616"/>
        <note>ligand shared between dimeric partners</note>
    </ligand>
</feature>
<feature type="binding site" evidence="1">
    <location>
        <position position="227"/>
    </location>
    <ligand>
        <name>Mg(2+)</name>
        <dbReference type="ChEBI" id="CHEBI:18420"/>
    </ligand>
</feature>
<feature type="site" description="Important for catalytic activity" evidence="1">
    <location>
        <position position="20"/>
    </location>
</feature>
<accession>A8A0V7</accession>
<name>SELD_ECOHS</name>
<keyword id="KW-0067">ATP-binding</keyword>
<keyword id="KW-0418">Kinase</keyword>
<keyword id="KW-0460">Magnesium</keyword>
<keyword id="KW-0479">Metal-binding</keyword>
<keyword id="KW-0547">Nucleotide-binding</keyword>
<keyword id="KW-0711">Selenium</keyword>
<keyword id="KW-0808">Transferase</keyword>
<dbReference type="EC" id="2.7.9.3" evidence="1"/>
<dbReference type="EMBL" id="CP000802">
    <property type="protein sequence ID" value="ABV06161.1"/>
    <property type="molecule type" value="Genomic_DNA"/>
</dbReference>
<dbReference type="RefSeq" id="WP_001295485.1">
    <property type="nucleotide sequence ID" value="NC_009800.1"/>
</dbReference>
<dbReference type="SMR" id="A8A0V7"/>
<dbReference type="GeneID" id="75057654"/>
<dbReference type="KEGG" id="ecx:EcHS_A1848"/>
<dbReference type="HOGENOM" id="CLU_032859_0_1_6"/>
<dbReference type="GO" id="GO:0005737">
    <property type="term" value="C:cytoplasm"/>
    <property type="evidence" value="ECO:0007669"/>
    <property type="project" value="TreeGrafter"/>
</dbReference>
<dbReference type="GO" id="GO:0005524">
    <property type="term" value="F:ATP binding"/>
    <property type="evidence" value="ECO:0007669"/>
    <property type="project" value="UniProtKB-UniRule"/>
</dbReference>
<dbReference type="GO" id="GO:0000287">
    <property type="term" value="F:magnesium ion binding"/>
    <property type="evidence" value="ECO:0007669"/>
    <property type="project" value="UniProtKB-UniRule"/>
</dbReference>
<dbReference type="GO" id="GO:0004756">
    <property type="term" value="F:selenide, water dikinase activity"/>
    <property type="evidence" value="ECO:0007669"/>
    <property type="project" value="UniProtKB-UniRule"/>
</dbReference>
<dbReference type="GO" id="GO:0016260">
    <property type="term" value="P:selenocysteine biosynthetic process"/>
    <property type="evidence" value="ECO:0007669"/>
    <property type="project" value="InterPro"/>
</dbReference>
<dbReference type="CDD" id="cd02195">
    <property type="entry name" value="SelD"/>
    <property type="match status" value="1"/>
</dbReference>
<dbReference type="FunFam" id="3.30.1330.10:FF:000003">
    <property type="entry name" value="Selenide, water dikinase"/>
    <property type="match status" value="1"/>
</dbReference>
<dbReference type="FunFam" id="3.90.650.10:FF:000004">
    <property type="entry name" value="Selenide, water dikinase"/>
    <property type="match status" value="1"/>
</dbReference>
<dbReference type="Gene3D" id="3.90.650.10">
    <property type="entry name" value="PurM-like C-terminal domain"/>
    <property type="match status" value="1"/>
</dbReference>
<dbReference type="Gene3D" id="3.30.1330.10">
    <property type="entry name" value="PurM-like, N-terminal domain"/>
    <property type="match status" value="1"/>
</dbReference>
<dbReference type="HAMAP" id="MF_00625">
    <property type="entry name" value="SelD"/>
    <property type="match status" value="1"/>
</dbReference>
<dbReference type="InterPro" id="IPR010918">
    <property type="entry name" value="PurM-like_C_dom"/>
</dbReference>
<dbReference type="InterPro" id="IPR036676">
    <property type="entry name" value="PurM-like_C_sf"/>
</dbReference>
<dbReference type="InterPro" id="IPR016188">
    <property type="entry name" value="PurM-like_N"/>
</dbReference>
<dbReference type="InterPro" id="IPR036921">
    <property type="entry name" value="PurM-like_N_sf"/>
</dbReference>
<dbReference type="InterPro" id="IPR023061">
    <property type="entry name" value="SelD_I"/>
</dbReference>
<dbReference type="InterPro" id="IPR004536">
    <property type="entry name" value="SPS/SelD"/>
</dbReference>
<dbReference type="NCBIfam" id="NF002098">
    <property type="entry name" value="PRK00943.1"/>
    <property type="match status" value="1"/>
</dbReference>
<dbReference type="NCBIfam" id="TIGR00476">
    <property type="entry name" value="selD"/>
    <property type="match status" value="1"/>
</dbReference>
<dbReference type="PANTHER" id="PTHR10256:SF0">
    <property type="entry name" value="INACTIVE SELENIDE, WATER DIKINASE-LIKE PROTEIN-RELATED"/>
    <property type="match status" value="1"/>
</dbReference>
<dbReference type="PANTHER" id="PTHR10256">
    <property type="entry name" value="SELENIDE, WATER DIKINASE"/>
    <property type="match status" value="1"/>
</dbReference>
<dbReference type="Pfam" id="PF00586">
    <property type="entry name" value="AIRS"/>
    <property type="match status" value="1"/>
</dbReference>
<dbReference type="Pfam" id="PF02769">
    <property type="entry name" value="AIRS_C"/>
    <property type="match status" value="1"/>
</dbReference>
<dbReference type="PIRSF" id="PIRSF036407">
    <property type="entry name" value="Selenphspht_syn"/>
    <property type="match status" value="1"/>
</dbReference>
<dbReference type="SUPFAM" id="SSF56042">
    <property type="entry name" value="PurM C-terminal domain-like"/>
    <property type="match status" value="1"/>
</dbReference>
<dbReference type="SUPFAM" id="SSF55326">
    <property type="entry name" value="PurM N-terminal domain-like"/>
    <property type="match status" value="1"/>
</dbReference>
<sequence>MSENSIRLTQYSHGAGCGCKISPKVLETILHSEQAKFVDPNLLVGNETRDDAAVYDLGNGTSVISTTDFFMPIVDNPFDFGRIAATNAISDIFAMGGKPIMAIAILGWPINKLSPEIAREVTEGGRYACRQAGIALAGGHSIDAPEPIFGLAVTGIVPTERVKKNSTAQAGCKLFLTKPLGIGVLTTAEKKSLLKPEHQGLATEVMCRMNIAGASFANIEGVKAMTDVTGFGLLGHLSEMCQGAGVQARVDYEAIPKLPGVEEYIKLGAVPGGTERNFASYGHLMGEMPREVRDLLCDPQTSGGLLLAVMPEAENEVKATAAEFGIELTAIGELVPARGGRAMVEIR</sequence>
<evidence type="ECO:0000255" key="1">
    <source>
        <dbReference type="HAMAP-Rule" id="MF_00625"/>
    </source>
</evidence>
<comment type="function">
    <text evidence="1">Synthesizes selenophosphate from selenide and ATP.</text>
</comment>
<comment type="catalytic activity">
    <reaction evidence="1">
        <text>hydrogenselenide + ATP + H2O = selenophosphate + AMP + phosphate + 2 H(+)</text>
        <dbReference type="Rhea" id="RHEA:18737"/>
        <dbReference type="ChEBI" id="CHEBI:15377"/>
        <dbReference type="ChEBI" id="CHEBI:15378"/>
        <dbReference type="ChEBI" id="CHEBI:16144"/>
        <dbReference type="ChEBI" id="CHEBI:29317"/>
        <dbReference type="ChEBI" id="CHEBI:30616"/>
        <dbReference type="ChEBI" id="CHEBI:43474"/>
        <dbReference type="ChEBI" id="CHEBI:456215"/>
        <dbReference type="EC" id="2.7.9.3"/>
    </reaction>
</comment>
<comment type="cofactor">
    <cofactor evidence="1">
        <name>Mg(2+)</name>
        <dbReference type="ChEBI" id="CHEBI:18420"/>
    </cofactor>
    <text evidence="1">Binds 1 Mg(2+) ion per monomer.</text>
</comment>
<comment type="subunit">
    <text evidence="1">Homodimer.</text>
</comment>
<comment type="similarity">
    <text evidence="1">Belongs to the selenophosphate synthase 1 family. Class I subfamily.</text>
</comment>
<gene>
    <name evidence="1" type="primary">selD</name>
    <name type="ordered locus">EcHS_A1848</name>
</gene>